<keyword id="KW-0507">mRNA processing</keyword>
<keyword id="KW-0508">mRNA splicing</keyword>
<keyword id="KW-0509">mRNA transport</keyword>
<keyword id="KW-0539">Nucleus</keyword>
<keyword id="KW-1185">Reference proteome</keyword>
<keyword id="KW-0677">Repeat</keyword>
<keyword id="KW-0694">RNA-binding</keyword>
<keyword id="KW-0943">RNA-mediated gene silencing</keyword>
<keyword id="KW-0813">Transport</keyword>
<keyword id="KW-0853">WD repeat</keyword>
<gene>
    <name type="primary">THO3</name>
    <name type="synonym">TEX1</name>
    <name type="ordered locus">At5g56130</name>
    <name type="ORF">MDA7.19</name>
</gene>
<reference key="1">
    <citation type="journal article" date="1998" name="DNA Res.">
        <title>Structural analysis of Arabidopsis thaliana chromosome 5. V. Sequence features of the regions of 1,381,565 bp covered by twenty one physically assigned P1 and TAC clones.</title>
        <authorList>
            <person name="Kaneko T."/>
            <person name="Kotani H."/>
            <person name="Nakamura Y."/>
            <person name="Sato S."/>
            <person name="Asamizu E."/>
            <person name="Miyajima N."/>
            <person name="Tabata S."/>
        </authorList>
    </citation>
    <scope>NUCLEOTIDE SEQUENCE [LARGE SCALE GENOMIC DNA]</scope>
    <source>
        <strain>cv. Columbia</strain>
    </source>
</reference>
<reference key="2">
    <citation type="journal article" date="2017" name="Plant J.">
        <title>Araport11: a complete reannotation of the Arabidopsis thaliana reference genome.</title>
        <authorList>
            <person name="Cheng C.Y."/>
            <person name="Krishnakumar V."/>
            <person name="Chan A.P."/>
            <person name="Thibaud-Nissen F."/>
            <person name="Schobel S."/>
            <person name="Town C.D."/>
        </authorList>
    </citation>
    <scope>GENOME REANNOTATION</scope>
    <source>
        <strain>cv. Columbia</strain>
    </source>
</reference>
<reference key="3">
    <citation type="journal article" date="2003" name="Science">
        <title>Empirical analysis of transcriptional activity in the Arabidopsis genome.</title>
        <authorList>
            <person name="Yamada K."/>
            <person name="Lim J."/>
            <person name="Dale J.M."/>
            <person name="Chen H."/>
            <person name="Shinn P."/>
            <person name="Palm C.J."/>
            <person name="Southwick A.M."/>
            <person name="Wu H.C."/>
            <person name="Kim C.J."/>
            <person name="Nguyen M."/>
            <person name="Pham P.K."/>
            <person name="Cheuk R.F."/>
            <person name="Karlin-Newmann G."/>
            <person name="Liu S.X."/>
            <person name="Lam B."/>
            <person name="Sakano H."/>
            <person name="Wu T."/>
            <person name="Yu G."/>
            <person name="Miranda M."/>
            <person name="Quach H.L."/>
            <person name="Tripp M."/>
            <person name="Chang C.H."/>
            <person name="Lee J.M."/>
            <person name="Toriumi M.J."/>
            <person name="Chan M.M."/>
            <person name="Tang C.C."/>
            <person name="Onodera C.S."/>
            <person name="Deng J.M."/>
            <person name="Akiyama K."/>
            <person name="Ansari Y."/>
            <person name="Arakawa T."/>
            <person name="Banh J."/>
            <person name="Banno F."/>
            <person name="Bowser L."/>
            <person name="Brooks S.Y."/>
            <person name="Carninci P."/>
            <person name="Chao Q."/>
            <person name="Choy N."/>
            <person name="Enju A."/>
            <person name="Goldsmith A.D."/>
            <person name="Gurjal M."/>
            <person name="Hansen N.F."/>
            <person name="Hayashizaki Y."/>
            <person name="Johnson-Hopson C."/>
            <person name="Hsuan V.W."/>
            <person name="Iida K."/>
            <person name="Karnes M."/>
            <person name="Khan S."/>
            <person name="Koesema E."/>
            <person name="Ishida J."/>
            <person name="Jiang P.X."/>
            <person name="Jones T."/>
            <person name="Kawai J."/>
            <person name="Kamiya A."/>
            <person name="Meyers C."/>
            <person name="Nakajima M."/>
            <person name="Narusaka M."/>
            <person name="Seki M."/>
            <person name="Sakurai T."/>
            <person name="Satou M."/>
            <person name="Tamse R."/>
            <person name="Vaysberg M."/>
            <person name="Wallender E.K."/>
            <person name="Wong C."/>
            <person name="Yamamura Y."/>
            <person name="Yuan S."/>
            <person name="Shinozaki K."/>
            <person name="Davis R.W."/>
            <person name="Theologis A."/>
            <person name="Ecker J.R."/>
        </authorList>
    </citation>
    <scope>NUCLEOTIDE SEQUENCE [LARGE SCALE MRNA]</scope>
    <source>
        <strain>cv. Columbia</strain>
    </source>
</reference>
<reference key="4">
    <citation type="journal article" date="2010" name="Plant Cell">
        <title>The conserved RNA trafficking proteins HPR1 and TEX1 are involved in the production of endogenous and exogenous small interfering RNA in Arabidopsis.</title>
        <authorList>
            <person name="Jauvion V."/>
            <person name="Elmayan T."/>
            <person name="Vaucheret H."/>
        </authorList>
    </citation>
    <scope>FUNCTION</scope>
    <scope>DISRUPTION PHENOTYPE</scope>
</reference>
<reference key="5">
    <citation type="journal article" date="2010" name="Proc. Natl. Acad. Sci. U.S.A.">
        <title>Putative Arabidopsis THO/TREX mRNA export complex is involved in transgene and endogenous siRNA biosynthesis.</title>
        <authorList>
            <person name="Yelina N.E."/>
            <person name="Smith L.M."/>
            <person name="Jones A.M."/>
            <person name="Patel K."/>
            <person name="Kelly K.A."/>
            <person name="Baulcombe D.C."/>
        </authorList>
    </citation>
    <scope>FUNCTION</scope>
    <scope>IDENTIFICATION BY MASS SPECTROMETRY</scope>
    <scope>SUBUNIT</scope>
    <scope>MUTAGENESIS OF SER-86</scope>
</reference>
<dbReference type="EMBL" id="AB011476">
    <property type="protein sequence ID" value="BAB09295.1"/>
    <property type="molecule type" value="Genomic_DNA"/>
</dbReference>
<dbReference type="EMBL" id="CP002688">
    <property type="protein sequence ID" value="AED96724.1"/>
    <property type="molecule type" value="Genomic_DNA"/>
</dbReference>
<dbReference type="EMBL" id="AY093120">
    <property type="protein sequence ID" value="AAM13119.1"/>
    <property type="molecule type" value="mRNA"/>
</dbReference>
<dbReference type="EMBL" id="BT000174">
    <property type="protein sequence ID" value="AAN15493.1"/>
    <property type="molecule type" value="mRNA"/>
</dbReference>
<dbReference type="RefSeq" id="NP_200424.1">
    <property type="nucleotide sequence ID" value="NM_124995.5"/>
</dbReference>
<dbReference type="SMR" id="Q9FKT5"/>
<dbReference type="BioGRID" id="20956">
    <property type="interactions" value="61"/>
</dbReference>
<dbReference type="FunCoup" id="Q9FKT5">
    <property type="interactions" value="3862"/>
</dbReference>
<dbReference type="STRING" id="3702.Q9FKT5"/>
<dbReference type="iPTMnet" id="Q9FKT5"/>
<dbReference type="PaxDb" id="3702-AT5G56130.1"/>
<dbReference type="ProteomicsDB" id="246464"/>
<dbReference type="EnsemblPlants" id="AT5G56130.1">
    <property type="protein sequence ID" value="AT5G56130.1"/>
    <property type="gene ID" value="AT5G56130"/>
</dbReference>
<dbReference type="GeneID" id="835712"/>
<dbReference type="Gramene" id="AT5G56130.1">
    <property type="protein sequence ID" value="AT5G56130.1"/>
    <property type="gene ID" value="AT5G56130"/>
</dbReference>
<dbReference type="KEGG" id="ath:AT5G56130"/>
<dbReference type="Araport" id="AT5G56130"/>
<dbReference type="TAIR" id="AT5G56130">
    <property type="gene designation" value="TEX1"/>
</dbReference>
<dbReference type="eggNOG" id="KOG1407">
    <property type="taxonomic scope" value="Eukaryota"/>
</dbReference>
<dbReference type="HOGENOM" id="CLU_045202_0_0_1"/>
<dbReference type="InParanoid" id="Q9FKT5"/>
<dbReference type="OMA" id="WNADGRH"/>
<dbReference type="PhylomeDB" id="Q9FKT5"/>
<dbReference type="PRO" id="PR:Q9FKT5"/>
<dbReference type="Proteomes" id="UP000006548">
    <property type="component" value="Chromosome 5"/>
</dbReference>
<dbReference type="ExpressionAtlas" id="Q9FKT5">
    <property type="expression patterns" value="baseline and differential"/>
</dbReference>
<dbReference type="GO" id="GO:0080008">
    <property type="term" value="C:Cul4-RING E3 ubiquitin ligase complex"/>
    <property type="evidence" value="ECO:0000250"/>
    <property type="project" value="TAIR"/>
</dbReference>
<dbReference type="GO" id="GO:0000347">
    <property type="term" value="C:THO complex"/>
    <property type="evidence" value="ECO:0000314"/>
    <property type="project" value="UniProtKB"/>
</dbReference>
<dbReference type="GO" id="GO:0003723">
    <property type="term" value="F:RNA binding"/>
    <property type="evidence" value="ECO:0007669"/>
    <property type="project" value="UniProtKB-KW"/>
</dbReference>
<dbReference type="GO" id="GO:0006406">
    <property type="term" value="P:mRNA export from nucleus"/>
    <property type="evidence" value="ECO:0007669"/>
    <property type="project" value="InterPro"/>
</dbReference>
<dbReference type="GO" id="GO:0006397">
    <property type="term" value="P:mRNA processing"/>
    <property type="evidence" value="ECO:0007669"/>
    <property type="project" value="UniProtKB-KW"/>
</dbReference>
<dbReference type="GO" id="GO:0031047">
    <property type="term" value="P:regulatory ncRNA-mediated gene silencing"/>
    <property type="evidence" value="ECO:0000315"/>
    <property type="project" value="TAIR"/>
</dbReference>
<dbReference type="GO" id="GO:0008380">
    <property type="term" value="P:RNA splicing"/>
    <property type="evidence" value="ECO:0007669"/>
    <property type="project" value="UniProtKB-KW"/>
</dbReference>
<dbReference type="GO" id="GO:0010267">
    <property type="term" value="P:ta-siRNA processing"/>
    <property type="evidence" value="ECO:0000315"/>
    <property type="project" value="TAIR"/>
</dbReference>
<dbReference type="CDD" id="cd00200">
    <property type="entry name" value="WD40"/>
    <property type="match status" value="1"/>
</dbReference>
<dbReference type="FunFam" id="2.130.10.10:FF:000300">
    <property type="entry name" value="THO complex subunit 3"/>
    <property type="match status" value="1"/>
</dbReference>
<dbReference type="FunFam" id="2.130.10.10:FF:000390">
    <property type="entry name" value="THO complex subunit 3"/>
    <property type="match status" value="1"/>
</dbReference>
<dbReference type="Gene3D" id="2.130.10.10">
    <property type="entry name" value="YVTN repeat-like/Quinoprotein amine dehydrogenase"/>
    <property type="match status" value="2"/>
</dbReference>
<dbReference type="InterPro" id="IPR020472">
    <property type="entry name" value="G-protein_beta_WD-40_rep"/>
</dbReference>
<dbReference type="InterPro" id="IPR040132">
    <property type="entry name" value="Tex1/THOC3"/>
</dbReference>
<dbReference type="InterPro" id="IPR015943">
    <property type="entry name" value="WD40/YVTN_repeat-like_dom_sf"/>
</dbReference>
<dbReference type="InterPro" id="IPR019775">
    <property type="entry name" value="WD40_repeat_CS"/>
</dbReference>
<dbReference type="InterPro" id="IPR036322">
    <property type="entry name" value="WD40_repeat_dom_sf"/>
</dbReference>
<dbReference type="InterPro" id="IPR001680">
    <property type="entry name" value="WD40_rpt"/>
</dbReference>
<dbReference type="PANTHER" id="PTHR22839:SF0">
    <property type="entry name" value="THO COMPLEX SUBUNIT 3"/>
    <property type="match status" value="1"/>
</dbReference>
<dbReference type="PANTHER" id="PTHR22839">
    <property type="entry name" value="THO COMPLEX SUBUNIT 3 THO3"/>
    <property type="match status" value="1"/>
</dbReference>
<dbReference type="Pfam" id="PF25174">
    <property type="entry name" value="Beta-prop_THOC3"/>
    <property type="match status" value="1"/>
</dbReference>
<dbReference type="PRINTS" id="PR00320">
    <property type="entry name" value="GPROTEINBRPT"/>
</dbReference>
<dbReference type="SMART" id="SM00320">
    <property type="entry name" value="WD40"/>
    <property type="match status" value="6"/>
</dbReference>
<dbReference type="SUPFAM" id="SSF50978">
    <property type="entry name" value="WD40 repeat-like"/>
    <property type="match status" value="1"/>
</dbReference>
<dbReference type="PROSITE" id="PS00678">
    <property type="entry name" value="WD_REPEATS_1"/>
    <property type="match status" value="2"/>
</dbReference>
<dbReference type="PROSITE" id="PS50082">
    <property type="entry name" value="WD_REPEATS_2"/>
    <property type="match status" value="3"/>
</dbReference>
<dbReference type="PROSITE" id="PS50294">
    <property type="entry name" value="WD_REPEATS_REGION"/>
    <property type="match status" value="1"/>
</dbReference>
<comment type="function">
    <text evidence="1 2">Acts as a component of the THO subcomplex of the TREX complex which is thought to couple mRNA transcription, processing and nuclear export. Contributes to the integrity of the endogenous trans-acting small interfering RNA (ta-siRNA) pathway. May process or transport a long RNA molecule so that it can be a template for secondary siRNA production. May participate in the trafficking of siRNA precursors to the ARGONAUTE catalytic center. Required for the generation of functional messenger ribonucleoproteins (mRNPs).</text>
</comment>
<comment type="subunit">
    <text evidence="1">Component of the THO complex, which is composed of THO1, THO2, THO3, THO5, THO6 and THO7.</text>
</comment>
<comment type="subcellular location">
    <subcellularLocation>
        <location evidence="3">Nucleus</location>
    </subcellularLocation>
</comment>
<comment type="disruption phenotype">
    <text evidence="2">Developmental defects as well as reduced levels of endogenous trans-acting small interfering RNA (ta-siRNA).</text>
</comment>
<comment type="similarity">
    <text evidence="3">Belongs to the THOC3 family.</text>
</comment>
<organism>
    <name type="scientific">Arabidopsis thaliana</name>
    <name type="common">Mouse-ear cress</name>
    <dbReference type="NCBI Taxonomy" id="3702"/>
    <lineage>
        <taxon>Eukaryota</taxon>
        <taxon>Viridiplantae</taxon>
        <taxon>Streptophyta</taxon>
        <taxon>Embryophyta</taxon>
        <taxon>Tracheophyta</taxon>
        <taxon>Spermatophyta</taxon>
        <taxon>Magnoliopsida</taxon>
        <taxon>eudicotyledons</taxon>
        <taxon>Gunneridae</taxon>
        <taxon>Pentapetalae</taxon>
        <taxon>rosids</taxon>
        <taxon>malvids</taxon>
        <taxon>Brassicales</taxon>
        <taxon>Brassicaceae</taxon>
        <taxon>Camelineae</taxon>
        <taxon>Arabidopsis</taxon>
    </lineage>
</organism>
<protein>
    <recommendedName>
        <fullName>THO complex subunit 3</fullName>
    </recommendedName>
    <alternativeName>
        <fullName>TEX1 homolog</fullName>
        <shortName>AtTEX1</shortName>
    </alternativeName>
</protein>
<sequence>MEETTIPFKSLHSREYQGHKKKVHSVAWNSNGTKLASGSVDQTARIWNIEPHGHSKAKDLELKGHTDSVDQLCWDPKHSDLVATASGDKSVRLWDARSGKCTQQVELSGENINITYKPDGTHVAVGNRDDELTILDVRKFKPLHRRKFNYEVNEIAWNMPGDFFFLTTGLGTVEVLSYPSLKPLDTLTAHTAGCYCIAIDPKGRYFAVGSADSLVSLWDISDMLCLRTFTKLEWPVRTISFNYSGEYIASASEDLFIDIANVQTGRTVHQIPCRAAMNSVEWNPKYNLLAYAGDDKNPKYNTDEGVFRIFGFESS</sequence>
<feature type="chain" id="PRO_0000425584" description="THO complex subunit 3">
    <location>
        <begin position="1"/>
        <end position="315"/>
    </location>
</feature>
<feature type="repeat" description="WD 1">
    <location>
        <begin position="18"/>
        <end position="57"/>
    </location>
</feature>
<feature type="repeat" description="WD 2">
    <location>
        <begin position="64"/>
        <end position="104"/>
    </location>
</feature>
<feature type="repeat" description="WD 3">
    <location>
        <begin position="106"/>
        <end position="145"/>
    </location>
</feature>
<feature type="repeat" description="WD 4">
    <location>
        <begin position="189"/>
        <end position="228"/>
    </location>
</feature>
<feature type="repeat" description="WD 5">
    <location>
        <begin position="231"/>
        <end position="270"/>
    </location>
</feature>
<feature type="repeat" description="WD 6">
    <location>
        <begin position="272"/>
        <end position="311"/>
    </location>
</feature>
<feature type="mutagenesis site" description="In attex1-2; reduced levels of endogenous trans-acting small interfering RNA (ta-siRNA)." evidence="1">
    <original>S</original>
    <variation>F</variation>
    <location>
        <position position="86"/>
    </location>
</feature>
<evidence type="ECO:0000269" key="1">
    <source>
    </source>
</evidence>
<evidence type="ECO:0000269" key="2">
    <source>
    </source>
</evidence>
<evidence type="ECO:0000305" key="3"/>
<proteinExistence type="evidence at protein level"/>
<accession>Q9FKT5</accession>
<name>THOC3_ARATH</name>